<feature type="signal peptide" evidence="1">
    <location>
        <begin position="1"/>
        <end position="26"/>
    </location>
</feature>
<feature type="chain" id="PRO_0000271533" description="Extracellular matrix protein-binding protein emp">
    <location>
        <begin position="27"/>
        <end position="340"/>
    </location>
</feature>
<proteinExistence type="inferred from homology"/>
<evidence type="ECO:0000250" key="1"/>
<keyword id="KW-0732">Signal</keyword>
<comment type="function">
    <text evidence="1">Adhesin that binds to the host cell extracellular matrix proteins fibronectin, fibrinogen, collagen, and vitronectin.</text>
</comment>
<comment type="subcellular location">
    <subcellularLocation>
        <location evidence="1">Cell surface</location>
    </subcellularLocation>
</comment>
<protein>
    <recommendedName>
        <fullName>Extracellular matrix protein-binding protein emp</fullName>
    </recommendedName>
</protein>
<sequence>MKKKLLVLTMSTLFATQIMNSNHAKASVTESVDKKFVVPESGINKIIPAYDEFKNSPKVNVSNLTDNKNFVASEDKLNKIADSSAASKIVDKNFVVPESKLGNIVPEYKEINNRVNVATNNPASQQVDKHFVAKGPEVNRFITQNKVNHHFITTQTHYKKVITSYKSTHVHKHVNHAKDSINKHFIVKPSESPRYTHPSQSLIIKHHFAVPGYHAHKFVTPGHASIKINHFCVVPQINSFKVIPPYGHNSHRMHVPSFQNNTTATHQNAKVNKAYDYKYFYSYKVVKGVKKYFSFSQSNGYKIGKPSLNIKNVNYQYAVPSYSPTHYVPEFKGSLPAPRV</sequence>
<reference key="1">
    <citation type="journal article" date="2006" name="Lancet">
        <title>Complete genome sequence of USA300, an epidemic clone of community-acquired meticillin-resistant Staphylococcus aureus.</title>
        <authorList>
            <person name="Diep B.A."/>
            <person name="Gill S.R."/>
            <person name="Chang R.F."/>
            <person name="Phan T.H."/>
            <person name="Chen J.H."/>
            <person name="Davidson M.G."/>
            <person name="Lin F."/>
            <person name="Lin J."/>
            <person name="Carleton H.A."/>
            <person name="Mongodin E.F."/>
            <person name="Sensabaugh G.F."/>
            <person name="Perdreau-Remington F."/>
        </authorList>
    </citation>
    <scope>NUCLEOTIDE SEQUENCE [LARGE SCALE GENOMIC DNA]</scope>
    <source>
        <strain>USA300</strain>
    </source>
</reference>
<accession>Q2FIK4</accession>
<dbReference type="EMBL" id="CP000255">
    <property type="protein sequence ID" value="ABD21569.1"/>
    <property type="molecule type" value="Genomic_DNA"/>
</dbReference>
<dbReference type="RefSeq" id="WP_000728056.1">
    <property type="nucleotide sequence ID" value="NZ_CP027476.1"/>
</dbReference>
<dbReference type="KEGG" id="saa:SAUSA300_0774"/>
<dbReference type="HOGENOM" id="CLU_078520_0_0_9"/>
<dbReference type="OMA" id="MINHYFA"/>
<dbReference type="Proteomes" id="UP000001939">
    <property type="component" value="Chromosome"/>
</dbReference>
<dbReference type="GO" id="GO:0009986">
    <property type="term" value="C:cell surface"/>
    <property type="evidence" value="ECO:0007669"/>
    <property type="project" value="UniProtKB-SubCell"/>
</dbReference>
<name>EMP_STAA3</name>
<gene>
    <name type="primary">emp</name>
    <name type="ordered locus">SAUSA300_0774</name>
</gene>
<organism>
    <name type="scientific">Staphylococcus aureus (strain USA300)</name>
    <dbReference type="NCBI Taxonomy" id="367830"/>
    <lineage>
        <taxon>Bacteria</taxon>
        <taxon>Bacillati</taxon>
        <taxon>Bacillota</taxon>
        <taxon>Bacilli</taxon>
        <taxon>Bacillales</taxon>
        <taxon>Staphylococcaceae</taxon>
        <taxon>Staphylococcus</taxon>
    </lineage>
</organism>